<name>IF1_COXBU</name>
<sequence length="83" mass="9326">MAKEESIEMQGTVVDSLPNTTFRVKLENGHVVTAHISGRMRKHYIRILTGDAVTVELTPYDLTRGRIVYREAGKKPPTSKAEE</sequence>
<keyword id="KW-0963">Cytoplasm</keyword>
<keyword id="KW-0396">Initiation factor</keyword>
<keyword id="KW-0648">Protein biosynthesis</keyword>
<keyword id="KW-1185">Reference proteome</keyword>
<keyword id="KW-0694">RNA-binding</keyword>
<keyword id="KW-0699">rRNA-binding</keyword>
<reference key="1">
    <citation type="journal article" date="2003" name="Proc. Natl. Acad. Sci. U.S.A.">
        <title>Complete genome sequence of the Q-fever pathogen, Coxiella burnetii.</title>
        <authorList>
            <person name="Seshadri R."/>
            <person name="Paulsen I.T."/>
            <person name="Eisen J.A."/>
            <person name="Read T.D."/>
            <person name="Nelson K.E."/>
            <person name="Nelson W.C."/>
            <person name="Ward N.L."/>
            <person name="Tettelin H."/>
            <person name="Davidsen T.M."/>
            <person name="Beanan M.J."/>
            <person name="DeBoy R.T."/>
            <person name="Daugherty S.C."/>
            <person name="Brinkac L.M."/>
            <person name="Madupu R."/>
            <person name="Dodson R.J."/>
            <person name="Khouri H.M."/>
            <person name="Lee K.H."/>
            <person name="Carty H.A."/>
            <person name="Scanlan D."/>
            <person name="Heinzen R.A."/>
            <person name="Thompson H.A."/>
            <person name="Samuel J.E."/>
            <person name="Fraser C.M."/>
            <person name="Heidelberg J.F."/>
        </authorList>
    </citation>
    <scope>NUCLEOTIDE SEQUENCE [LARGE SCALE GENOMIC DNA]</scope>
    <source>
        <strain>RSA 493 / Nine Mile phase I</strain>
    </source>
</reference>
<accession>Q83CD1</accession>
<evidence type="ECO:0000255" key="1">
    <source>
        <dbReference type="HAMAP-Rule" id="MF_00075"/>
    </source>
</evidence>
<organism>
    <name type="scientific">Coxiella burnetii (strain RSA 493 / Nine Mile phase I)</name>
    <dbReference type="NCBI Taxonomy" id="227377"/>
    <lineage>
        <taxon>Bacteria</taxon>
        <taxon>Pseudomonadati</taxon>
        <taxon>Pseudomonadota</taxon>
        <taxon>Gammaproteobacteria</taxon>
        <taxon>Legionellales</taxon>
        <taxon>Coxiellaceae</taxon>
        <taxon>Coxiella</taxon>
    </lineage>
</organism>
<protein>
    <recommendedName>
        <fullName evidence="1">Translation initiation factor IF-1</fullName>
    </recommendedName>
</protein>
<dbReference type="EMBL" id="AE016828">
    <property type="protein sequence ID" value="AAO90704.1"/>
    <property type="molecule type" value="Genomic_DNA"/>
</dbReference>
<dbReference type="RefSeq" id="NP_820190.1">
    <property type="nucleotide sequence ID" value="NC_002971.4"/>
</dbReference>
<dbReference type="RefSeq" id="WP_005770719.1">
    <property type="nucleotide sequence ID" value="NZ_CCYB01000035.1"/>
</dbReference>
<dbReference type="SMR" id="Q83CD1"/>
<dbReference type="STRING" id="227377.CBU_1195"/>
<dbReference type="EnsemblBacteria" id="AAO90704">
    <property type="protein sequence ID" value="AAO90704"/>
    <property type="gene ID" value="CBU_1195"/>
</dbReference>
<dbReference type="GeneID" id="1209099"/>
<dbReference type="KEGG" id="cbu:CBU_1195"/>
<dbReference type="PATRIC" id="fig|227377.7.peg.1192"/>
<dbReference type="eggNOG" id="COG0361">
    <property type="taxonomic scope" value="Bacteria"/>
</dbReference>
<dbReference type="HOGENOM" id="CLU_151267_1_0_6"/>
<dbReference type="OrthoDB" id="9803250at2"/>
<dbReference type="Proteomes" id="UP000002671">
    <property type="component" value="Chromosome"/>
</dbReference>
<dbReference type="GO" id="GO:0005829">
    <property type="term" value="C:cytosol"/>
    <property type="evidence" value="ECO:0000318"/>
    <property type="project" value="GO_Central"/>
</dbReference>
<dbReference type="GO" id="GO:0043022">
    <property type="term" value="F:ribosome binding"/>
    <property type="evidence" value="ECO:0000318"/>
    <property type="project" value="GO_Central"/>
</dbReference>
<dbReference type="GO" id="GO:0019843">
    <property type="term" value="F:rRNA binding"/>
    <property type="evidence" value="ECO:0007669"/>
    <property type="project" value="UniProtKB-UniRule"/>
</dbReference>
<dbReference type="GO" id="GO:0003743">
    <property type="term" value="F:translation initiation factor activity"/>
    <property type="evidence" value="ECO:0007669"/>
    <property type="project" value="UniProtKB-UniRule"/>
</dbReference>
<dbReference type="CDD" id="cd04451">
    <property type="entry name" value="S1_IF1"/>
    <property type="match status" value="1"/>
</dbReference>
<dbReference type="FunFam" id="2.40.50.140:FF:000002">
    <property type="entry name" value="Translation initiation factor IF-1"/>
    <property type="match status" value="1"/>
</dbReference>
<dbReference type="Gene3D" id="2.40.50.140">
    <property type="entry name" value="Nucleic acid-binding proteins"/>
    <property type="match status" value="1"/>
</dbReference>
<dbReference type="HAMAP" id="MF_00075">
    <property type="entry name" value="IF_1"/>
    <property type="match status" value="1"/>
</dbReference>
<dbReference type="InterPro" id="IPR012340">
    <property type="entry name" value="NA-bd_OB-fold"/>
</dbReference>
<dbReference type="InterPro" id="IPR006196">
    <property type="entry name" value="RNA-binding_domain_S1_IF1"/>
</dbReference>
<dbReference type="InterPro" id="IPR003029">
    <property type="entry name" value="S1_domain"/>
</dbReference>
<dbReference type="InterPro" id="IPR004368">
    <property type="entry name" value="TIF_IF1"/>
</dbReference>
<dbReference type="NCBIfam" id="TIGR00008">
    <property type="entry name" value="infA"/>
    <property type="match status" value="1"/>
</dbReference>
<dbReference type="PANTHER" id="PTHR33370">
    <property type="entry name" value="TRANSLATION INITIATION FACTOR IF-1, CHLOROPLASTIC"/>
    <property type="match status" value="1"/>
</dbReference>
<dbReference type="PANTHER" id="PTHR33370:SF1">
    <property type="entry name" value="TRANSLATION INITIATION FACTOR IF-1, CHLOROPLASTIC"/>
    <property type="match status" value="1"/>
</dbReference>
<dbReference type="Pfam" id="PF01176">
    <property type="entry name" value="eIF-1a"/>
    <property type="match status" value="1"/>
</dbReference>
<dbReference type="SMART" id="SM00316">
    <property type="entry name" value="S1"/>
    <property type="match status" value="1"/>
</dbReference>
<dbReference type="SUPFAM" id="SSF50249">
    <property type="entry name" value="Nucleic acid-binding proteins"/>
    <property type="match status" value="1"/>
</dbReference>
<dbReference type="PROSITE" id="PS50832">
    <property type="entry name" value="S1_IF1_TYPE"/>
    <property type="match status" value="1"/>
</dbReference>
<gene>
    <name evidence="1" type="primary">infA</name>
    <name type="ordered locus">CBU_1195</name>
</gene>
<feature type="chain" id="PRO_0000095780" description="Translation initiation factor IF-1">
    <location>
        <begin position="1"/>
        <end position="83"/>
    </location>
</feature>
<feature type="domain" description="S1-like" evidence="1">
    <location>
        <begin position="1"/>
        <end position="72"/>
    </location>
</feature>
<proteinExistence type="inferred from homology"/>
<comment type="function">
    <text evidence="1">One of the essential components for the initiation of protein synthesis. Stabilizes the binding of IF-2 and IF-3 on the 30S subunit to which N-formylmethionyl-tRNA(fMet) subsequently binds. Helps modulate mRNA selection, yielding the 30S pre-initiation complex (PIC). Upon addition of the 50S ribosomal subunit IF-1, IF-2 and IF-3 are released leaving the mature 70S translation initiation complex.</text>
</comment>
<comment type="subunit">
    <text evidence="1">Component of the 30S ribosomal translation pre-initiation complex which assembles on the 30S ribosome in the order IF-2 and IF-3, IF-1 and N-formylmethionyl-tRNA(fMet); mRNA recruitment can occur at any time during PIC assembly.</text>
</comment>
<comment type="subcellular location">
    <subcellularLocation>
        <location evidence="1">Cytoplasm</location>
    </subcellularLocation>
</comment>
<comment type="similarity">
    <text evidence="1">Belongs to the IF-1 family.</text>
</comment>